<comment type="function">
    <text evidence="1">Could be a nuclease involved in processing of the 5'-end of pre-16S rRNA.</text>
</comment>
<comment type="subcellular location">
    <subcellularLocation>
        <location evidence="1">Cytoplasm</location>
    </subcellularLocation>
</comment>
<comment type="similarity">
    <text evidence="1">Belongs to the YqgF nuclease family.</text>
</comment>
<evidence type="ECO:0000255" key="1">
    <source>
        <dbReference type="HAMAP-Rule" id="MF_00651"/>
    </source>
</evidence>
<accession>A9WCR4</accession>
<organism>
    <name type="scientific">Chloroflexus aurantiacus (strain ATCC 29366 / DSM 635 / J-10-fl)</name>
    <dbReference type="NCBI Taxonomy" id="324602"/>
    <lineage>
        <taxon>Bacteria</taxon>
        <taxon>Bacillati</taxon>
        <taxon>Chloroflexota</taxon>
        <taxon>Chloroflexia</taxon>
        <taxon>Chloroflexales</taxon>
        <taxon>Chloroflexineae</taxon>
        <taxon>Chloroflexaceae</taxon>
        <taxon>Chloroflexus</taxon>
    </lineage>
</organism>
<feature type="chain" id="PRO_1000082738" description="Putative pre-16S rRNA nuclease">
    <location>
        <begin position="1"/>
        <end position="153"/>
    </location>
</feature>
<dbReference type="EC" id="3.1.-.-" evidence="1"/>
<dbReference type="EMBL" id="CP000909">
    <property type="protein sequence ID" value="ABY37026.1"/>
    <property type="molecule type" value="Genomic_DNA"/>
</dbReference>
<dbReference type="RefSeq" id="YP_001637415.1">
    <property type="nucleotide sequence ID" value="NC_010175.1"/>
</dbReference>
<dbReference type="SMR" id="A9WCR4"/>
<dbReference type="FunCoup" id="A9WCR4">
    <property type="interactions" value="291"/>
</dbReference>
<dbReference type="STRING" id="324602.Caur_3849"/>
<dbReference type="EnsemblBacteria" id="ABY37026">
    <property type="protein sequence ID" value="ABY37026"/>
    <property type="gene ID" value="Caur_3849"/>
</dbReference>
<dbReference type="KEGG" id="cau:Caur_3849"/>
<dbReference type="PATRIC" id="fig|324602.8.peg.4322"/>
<dbReference type="eggNOG" id="COG0816">
    <property type="taxonomic scope" value="Bacteria"/>
</dbReference>
<dbReference type="HOGENOM" id="CLU_098240_2_0_0"/>
<dbReference type="InParanoid" id="A9WCR4"/>
<dbReference type="Proteomes" id="UP000002008">
    <property type="component" value="Chromosome"/>
</dbReference>
<dbReference type="GO" id="GO:0005737">
    <property type="term" value="C:cytoplasm"/>
    <property type="evidence" value="ECO:0007669"/>
    <property type="project" value="UniProtKB-SubCell"/>
</dbReference>
<dbReference type="GO" id="GO:0004518">
    <property type="term" value="F:nuclease activity"/>
    <property type="evidence" value="ECO:0007669"/>
    <property type="project" value="UniProtKB-KW"/>
</dbReference>
<dbReference type="GO" id="GO:0000967">
    <property type="term" value="P:rRNA 5'-end processing"/>
    <property type="evidence" value="ECO:0000318"/>
    <property type="project" value="GO_Central"/>
</dbReference>
<dbReference type="CDD" id="cd16964">
    <property type="entry name" value="YqgF"/>
    <property type="match status" value="1"/>
</dbReference>
<dbReference type="FunFam" id="3.30.420.140:FF:000005">
    <property type="entry name" value="Putative pre-16S rRNA nuclease"/>
    <property type="match status" value="1"/>
</dbReference>
<dbReference type="Gene3D" id="3.30.420.140">
    <property type="entry name" value="YqgF/RNase H-like domain"/>
    <property type="match status" value="1"/>
</dbReference>
<dbReference type="HAMAP" id="MF_00651">
    <property type="entry name" value="Nuclease_YqgF"/>
    <property type="match status" value="1"/>
</dbReference>
<dbReference type="InterPro" id="IPR012337">
    <property type="entry name" value="RNaseH-like_sf"/>
</dbReference>
<dbReference type="InterPro" id="IPR005227">
    <property type="entry name" value="YqgF"/>
</dbReference>
<dbReference type="InterPro" id="IPR006641">
    <property type="entry name" value="YqgF/RNaseH-like_dom"/>
</dbReference>
<dbReference type="InterPro" id="IPR037027">
    <property type="entry name" value="YqgF/RNaseH-like_dom_sf"/>
</dbReference>
<dbReference type="NCBIfam" id="TIGR00250">
    <property type="entry name" value="RNAse_H_YqgF"/>
    <property type="match status" value="1"/>
</dbReference>
<dbReference type="PANTHER" id="PTHR33317">
    <property type="entry name" value="POLYNUCLEOTIDYL TRANSFERASE, RIBONUCLEASE H-LIKE SUPERFAMILY PROTEIN"/>
    <property type="match status" value="1"/>
</dbReference>
<dbReference type="PANTHER" id="PTHR33317:SF4">
    <property type="entry name" value="POLYNUCLEOTIDYL TRANSFERASE, RIBONUCLEASE H-LIKE SUPERFAMILY PROTEIN"/>
    <property type="match status" value="1"/>
</dbReference>
<dbReference type="Pfam" id="PF03652">
    <property type="entry name" value="RuvX"/>
    <property type="match status" value="1"/>
</dbReference>
<dbReference type="SMART" id="SM00732">
    <property type="entry name" value="YqgFc"/>
    <property type="match status" value="1"/>
</dbReference>
<dbReference type="SUPFAM" id="SSF53098">
    <property type="entry name" value="Ribonuclease H-like"/>
    <property type="match status" value="1"/>
</dbReference>
<name>YQGF_CHLAA</name>
<sequence length="153" mass="16710">MNDQIILALDVGERRIGVAISDADARIAAPLTTINAHPPERAIAQIVRLVQERGVSRVVVGLPLTMRGERGPQAEVVQRFADTLSSALSCPVEMFDERLTSVAAEQMLRNLGLKPAKIKAQIDQVAASIILQDYLDARRSNPNRSHELPHSSD</sequence>
<proteinExistence type="inferred from homology"/>
<keyword id="KW-0963">Cytoplasm</keyword>
<keyword id="KW-0378">Hydrolase</keyword>
<keyword id="KW-0540">Nuclease</keyword>
<keyword id="KW-1185">Reference proteome</keyword>
<keyword id="KW-0690">Ribosome biogenesis</keyword>
<gene>
    <name type="ordered locus">Caur_3849</name>
</gene>
<protein>
    <recommendedName>
        <fullName evidence="1">Putative pre-16S rRNA nuclease</fullName>
        <ecNumber evidence="1">3.1.-.-</ecNumber>
    </recommendedName>
</protein>
<reference key="1">
    <citation type="journal article" date="2011" name="BMC Genomics">
        <title>Complete genome sequence of the filamentous anoxygenic phototrophic bacterium Chloroflexus aurantiacus.</title>
        <authorList>
            <person name="Tang K.H."/>
            <person name="Barry K."/>
            <person name="Chertkov O."/>
            <person name="Dalin E."/>
            <person name="Han C.S."/>
            <person name="Hauser L.J."/>
            <person name="Honchak B.M."/>
            <person name="Karbach L.E."/>
            <person name="Land M.L."/>
            <person name="Lapidus A."/>
            <person name="Larimer F.W."/>
            <person name="Mikhailova N."/>
            <person name="Pitluck S."/>
            <person name="Pierson B.K."/>
            <person name="Blankenship R.E."/>
        </authorList>
    </citation>
    <scope>NUCLEOTIDE SEQUENCE [LARGE SCALE GENOMIC DNA]</scope>
    <source>
        <strain>ATCC 29366 / DSM 635 / J-10-fl</strain>
    </source>
</reference>